<dbReference type="EMBL" id="X66059">
    <property type="protein sequence ID" value="CAA46857.1"/>
    <property type="molecule type" value="Genomic_DNA"/>
</dbReference>
<dbReference type="PIR" id="S50187">
    <property type="entry name" value="S50187"/>
</dbReference>
<dbReference type="RefSeq" id="WP_002884611.1">
    <property type="nucleotide sequence ID" value="NZ_WYAL01000049.1"/>
</dbReference>
<dbReference type="SMR" id="P37080"/>
<dbReference type="TCDB" id="4.A.6.1.3">
    <property type="family name" value="the pts mannose-fructose-sorbose (man) family"/>
</dbReference>
<dbReference type="OMA" id="EIADNQQ"/>
<dbReference type="GO" id="GO:0005737">
    <property type="term" value="C:cytoplasm"/>
    <property type="evidence" value="ECO:0007669"/>
    <property type="project" value="UniProtKB-SubCell"/>
</dbReference>
<dbReference type="GO" id="GO:0016020">
    <property type="term" value="C:membrane"/>
    <property type="evidence" value="ECO:0007669"/>
    <property type="project" value="InterPro"/>
</dbReference>
<dbReference type="GO" id="GO:0016301">
    <property type="term" value="F:kinase activity"/>
    <property type="evidence" value="ECO:0007669"/>
    <property type="project" value="UniProtKB-KW"/>
</dbReference>
<dbReference type="GO" id="GO:0016773">
    <property type="term" value="F:phosphotransferase activity, alcohol group as acceptor"/>
    <property type="evidence" value="ECO:0007669"/>
    <property type="project" value="InterPro"/>
</dbReference>
<dbReference type="GO" id="GO:0009401">
    <property type="term" value="P:phosphoenolpyruvate-dependent sugar phosphotransferase system"/>
    <property type="evidence" value="ECO:0007669"/>
    <property type="project" value="UniProtKB-KW"/>
</dbReference>
<dbReference type="CDD" id="cd00006">
    <property type="entry name" value="PTS_IIA_man"/>
    <property type="match status" value="1"/>
</dbReference>
<dbReference type="Gene3D" id="3.40.50.510">
    <property type="entry name" value="Phosphotransferase system, mannose-type IIA component"/>
    <property type="match status" value="1"/>
</dbReference>
<dbReference type="InterPro" id="IPR051471">
    <property type="entry name" value="Bacterial_PTS_sugar_comp"/>
</dbReference>
<dbReference type="InterPro" id="IPR013789">
    <property type="entry name" value="PTS_EIIA_man"/>
</dbReference>
<dbReference type="InterPro" id="IPR004701">
    <property type="entry name" value="PTS_EIIA_man-typ"/>
</dbReference>
<dbReference type="InterPro" id="IPR036662">
    <property type="entry name" value="PTS_EIIA_man-typ_sf"/>
</dbReference>
<dbReference type="InterPro" id="IPR033887">
    <property type="entry name" value="PTS_IIA_man"/>
</dbReference>
<dbReference type="NCBIfam" id="TIGR00824">
    <property type="entry name" value="EIIA-man"/>
    <property type="match status" value="1"/>
</dbReference>
<dbReference type="PANTHER" id="PTHR33799">
    <property type="entry name" value="PTS PERMEASE-RELATED-RELATED"/>
    <property type="match status" value="1"/>
</dbReference>
<dbReference type="PANTHER" id="PTHR33799:SF1">
    <property type="entry name" value="PTS SYSTEM MANNOSE-SPECIFIC EIIAB COMPONENT-RELATED"/>
    <property type="match status" value="1"/>
</dbReference>
<dbReference type="Pfam" id="PF03610">
    <property type="entry name" value="EIIA-man"/>
    <property type="match status" value="1"/>
</dbReference>
<dbReference type="SUPFAM" id="SSF53062">
    <property type="entry name" value="PTS system fructose IIA component-like"/>
    <property type="match status" value="1"/>
</dbReference>
<dbReference type="PROSITE" id="PS51096">
    <property type="entry name" value="PTS_EIIA_TYPE_4"/>
    <property type="match status" value="1"/>
</dbReference>
<keyword id="KW-0963">Cytoplasm</keyword>
<keyword id="KW-0418">Kinase</keyword>
<keyword id="KW-0597">Phosphoprotein</keyword>
<keyword id="KW-0598">Phosphotransferase system</keyword>
<keyword id="KW-0762">Sugar transport</keyword>
<keyword id="KW-0808">Transferase</keyword>
<keyword id="KW-0813">Transport</keyword>
<name>PTRA_KLEPN</name>
<sequence>MVHAIFCAHGQLAGAMLDSVCMVYGEVNVSAVAFVPGENAADIAINLEKLVSAHTDEEWVIAVDLQCGSPWNAAAGLAMRHPQIRVISGLSLPLALELVDNQHTLSADDLCQHLQAIASQCCVVWQQPETVEEEF</sequence>
<proteinExistence type="evidence at protein level"/>
<reference key="1">
    <citation type="journal article" date="1994" name="Biochim. Biophys. Acta">
        <title>Sequence of the sor-operon for L-sorbose utilization from Klebsiella pneumoniae KAY2026.</title>
        <authorList>
            <person name="Wehmeier U.F."/>
            <person name="Lengeler J.W."/>
        </authorList>
    </citation>
    <scope>NUCLEOTIDE SEQUENCE [GENOMIC DNA]</scope>
    <scope>FUNCTION</scope>
    <source>
        <strain>1033-5P14 / KAY2026</strain>
    </source>
</reference>
<reference key="2">
    <citation type="journal article" date="1995" name="Mol. Gen. Genet.">
        <title>Molecular analysis of the phosphoenolpyruvate-dependent L-sorbose: phosphotransferase system from Klebsiella pneumoniae and of its multidomain structure.</title>
        <authorList>
            <person name="Wehmeier U.F."/>
            <person name="Wohrl B.M."/>
            <person name="Lengeler J.W."/>
        </authorList>
    </citation>
    <scope>NUCLEOTIDE SEQUENCE [GENOMIC DNA]</scope>
</reference>
<reference key="3">
    <citation type="journal article" date="1984" name="J. Bacteriol.">
        <title>L-Sorbose metabolism in Klebsiella pneumoniae and Sor+ derivatives of Escherichia coli K-12 and chemotaxis toward sorbose.</title>
        <authorList>
            <person name="Sprenger G.A."/>
            <person name="Lengeler J.W."/>
        </authorList>
    </citation>
    <scope>FUNCTION</scope>
    <scope>CATALYTIC ACTIVITY</scope>
    <source>
        <strain>1033-5P14 / KAY2026</strain>
    </source>
</reference>
<reference key="4">
    <citation type="journal article" date="1990" name="Mol. Microbiol.">
        <title>Cloning and physical mapping of the sor genes for L-sorbose transport and metabolism from Klebsiella pneumoniae.</title>
        <authorList>
            <person name="Woehrl B.M."/>
            <person name="Lengeler J.W."/>
        </authorList>
    </citation>
    <scope>FUNCTION</scope>
    <scope>INDUCTION</scope>
</reference>
<feature type="chain" id="PRO_0000186665" description="PTS system sorbose-specific EIIA component">
    <location>
        <begin position="1"/>
        <end position="135"/>
    </location>
</feature>
<feature type="domain" description="PTS EIIA type-4" evidence="1">
    <location>
        <begin position="1"/>
        <end position="131"/>
    </location>
</feature>
<feature type="active site" description="Tele-phosphohistidine intermediate" evidence="1">
    <location>
        <position position="9"/>
    </location>
</feature>
<feature type="modified residue" description="Phosphohistidine; by HPr" evidence="5">
    <location>
        <position position="9"/>
    </location>
</feature>
<evidence type="ECO:0000255" key="1">
    <source>
        <dbReference type="PROSITE-ProRule" id="PRU00419"/>
    </source>
</evidence>
<evidence type="ECO:0000269" key="2">
    <source>
    </source>
</evidence>
<evidence type="ECO:0000269" key="3">
    <source>
    </source>
</evidence>
<evidence type="ECO:0000303" key="4">
    <source>
    </source>
</evidence>
<evidence type="ECO:0000305" key="5"/>
<evidence type="ECO:0000305" key="6">
    <source>
    </source>
</evidence>
<evidence type="ECO:0000305" key="7">
    <source>
    </source>
</evidence>
<organism>
    <name type="scientific">Klebsiella pneumoniae</name>
    <dbReference type="NCBI Taxonomy" id="573"/>
    <lineage>
        <taxon>Bacteria</taxon>
        <taxon>Pseudomonadati</taxon>
        <taxon>Pseudomonadota</taxon>
        <taxon>Gammaproteobacteria</taxon>
        <taxon>Enterobacterales</taxon>
        <taxon>Enterobacteriaceae</taxon>
        <taxon>Klebsiella/Raoultella group</taxon>
        <taxon>Klebsiella</taxon>
        <taxon>Klebsiella pneumoniae complex</taxon>
    </lineage>
</organism>
<protein>
    <recommendedName>
        <fullName evidence="4">PTS system sorbose-specific EIIA component</fullName>
    </recommendedName>
    <alternativeName>
        <fullName evidence="4">EIIA-Sor</fullName>
    </alternativeName>
    <alternativeName>
        <fullName>EIII-F-Sor</fullName>
    </alternativeName>
    <alternativeName>
        <fullName evidence="4">Sorbose-specific phosphotransferase enzyme IIA component</fullName>
    </alternativeName>
</protein>
<gene>
    <name evidence="4" type="primary">sorF</name>
</gene>
<accession>P37080</accession>
<comment type="function">
    <text evidence="3 6 7">The phosphoenolpyruvate-dependent sugar phosphotransferase system (PTS), a major carbohydrate active transport system, catalyzes the phosphorylation of incoming sugar substrates concomitant with their translocation across the cell membrane. The enzyme II SorABFM PTS system is involved in L-sorbose transport.</text>
</comment>
<comment type="subcellular location">
    <subcellularLocation>
        <location evidence="5">Cytoplasm</location>
    </subcellularLocation>
</comment>
<comment type="induction">
    <text evidence="2">By L-sorbose.</text>
</comment>
<comment type="domain">
    <text evidence="1">The EIIA type-4 domain is phosphorylated by phospho-HPr on a histidyl residue. Then, it transfers the phosphoryl group to the EIIB type-4 domain.</text>
</comment>